<sequence length="186" mass="20586">MTTAFDIADIKRRMAGAVTSLKQELGGLRTGRASASLLEPITVDAYGANMPLAQVATVSVPEPRLLSVQVWDRGMVNAVEKAIRDSNLGLNPNTEGQTLRIRIPELNEERRKELVKVAHKYAEAARVAVRHVRRDGMDLLKKLEKDSAISSDDMERLSKDVQKATDETISEVDQTLAHKEKEILSV</sequence>
<name>RRF_AZOC5</name>
<accession>A8I468</accession>
<evidence type="ECO:0000255" key="1">
    <source>
        <dbReference type="HAMAP-Rule" id="MF_00040"/>
    </source>
</evidence>
<keyword id="KW-0963">Cytoplasm</keyword>
<keyword id="KW-0648">Protein biosynthesis</keyword>
<keyword id="KW-1185">Reference proteome</keyword>
<organism>
    <name type="scientific">Azorhizobium caulinodans (strain ATCC 43989 / DSM 5975 / JCM 20966 / LMG 6465 / NBRC 14845 / NCIMB 13405 / ORS 571)</name>
    <dbReference type="NCBI Taxonomy" id="438753"/>
    <lineage>
        <taxon>Bacteria</taxon>
        <taxon>Pseudomonadati</taxon>
        <taxon>Pseudomonadota</taxon>
        <taxon>Alphaproteobacteria</taxon>
        <taxon>Hyphomicrobiales</taxon>
        <taxon>Xanthobacteraceae</taxon>
        <taxon>Azorhizobium</taxon>
    </lineage>
</organism>
<reference key="1">
    <citation type="submission" date="2007-04" db="EMBL/GenBank/DDBJ databases">
        <title>Complete genome sequence of the nitrogen-fixing bacterium Azorhizobium caulinodans ORS571.</title>
        <authorList>
            <person name="Lee K.B."/>
            <person name="Backer P.D."/>
            <person name="Aono T."/>
            <person name="Liu C.T."/>
            <person name="Suzuki S."/>
            <person name="Suzuki T."/>
            <person name="Kaneko T."/>
            <person name="Yamada M."/>
            <person name="Tabata S."/>
            <person name="Kupfer D.M."/>
            <person name="Najar F.Z."/>
            <person name="Wiley G.B."/>
            <person name="Roe B."/>
            <person name="Binnewies T."/>
            <person name="Ussery D."/>
            <person name="Vereecke D."/>
            <person name="Gevers D."/>
            <person name="Holsters M."/>
            <person name="Oyaizu H."/>
        </authorList>
    </citation>
    <scope>NUCLEOTIDE SEQUENCE [LARGE SCALE GENOMIC DNA]</scope>
    <source>
        <strain>ATCC 43989 / DSM 5975 / JCM 20966 / LMG 6465 / NBRC 14845 / NCIMB 13405 / ORS 571</strain>
    </source>
</reference>
<protein>
    <recommendedName>
        <fullName evidence="1">Ribosome-recycling factor</fullName>
        <shortName evidence="1">RRF</shortName>
    </recommendedName>
    <alternativeName>
        <fullName evidence="1">Ribosome-releasing factor</fullName>
    </alternativeName>
</protein>
<feature type="chain" id="PRO_1000071059" description="Ribosome-recycling factor">
    <location>
        <begin position="1"/>
        <end position="186"/>
    </location>
</feature>
<comment type="function">
    <text evidence="1">Responsible for the release of ribosomes from messenger RNA at the termination of protein biosynthesis. May increase the efficiency of translation by recycling ribosomes from one round of translation to another.</text>
</comment>
<comment type="subcellular location">
    <subcellularLocation>
        <location evidence="1">Cytoplasm</location>
    </subcellularLocation>
</comment>
<comment type="similarity">
    <text evidence="1">Belongs to the RRF family.</text>
</comment>
<gene>
    <name evidence="1" type="primary">frr</name>
    <name type="ordered locus">AZC_1696</name>
</gene>
<dbReference type="EMBL" id="AP009384">
    <property type="protein sequence ID" value="BAF87694.1"/>
    <property type="molecule type" value="Genomic_DNA"/>
</dbReference>
<dbReference type="RefSeq" id="WP_012170224.1">
    <property type="nucleotide sequence ID" value="NC_009937.1"/>
</dbReference>
<dbReference type="SMR" id="A8I468"/>
<dbReference type="STRING" id="438753.AZC_1696"/>
<dbReference type="KEGG" id="azc:AZC_1696"/>
<dbReference type="eggNOG" id="COG0233">
    <property type="taxonomic scope" value="Bacteria"/>
</dbReference>
<dbReference type="HOGENOM" id="CLU_073981_2_0_5"/>
<dbReference type="Proteomes" id="UP000000270">
    <property type="component" value="Chromosome"/>
</dbReference>
<dbReference type="GO" id="GO:0005829">
    <property type="term" value="C:cytosol"/>
    <property type="evidence" value="ECO:0007669"/>
    <property type="project" value="GOC"/>
</dbReference>
<dbReference type="GO" id="GO:0043023">
    <property type="term" value="F:ribosomal large subunit binding"/>
    <property type="evidence" value="ECO:0007669"/>
    <property type="project" value="TreeGrafter"/>
</dbReference>
<dbReference type="GO" id="GO:0002184">
    <property type="term" value="P:cytoplasmic translational termination"/>
    <property type="evidence" value="ECO:0007669"/>
    <property type="project" value="TreeGrafter"/>
</dbReference>
<dbReference type="CDD" id="cd00520">
    <property type="entry name" value="RRF"/>
    <property type="match status" value="1"/>
</dbReference>
<dbReference type="FunFam" id="1.10.132.20:FF:000001">
    <property type="entry name" value="Ribosome-recycling factor"/>
    <property type="match status" value="1"/>
</dbReference>
<dbReference type="FunFam" id="3.30.1360.40:FF:000001">
    <property type="entry name" value="Ribosome-recycling factor"/>
    <property type="match status" value="1"/>
</dbReference>
<dbReference type="Gene3D" id="3.30.1360.40">
    <property type="match status" value="1"/>
</dbReference>
<dbReference type="Gene3D" id="1.10.132.20">
    <property type="entry name" value="Ribosome-recycling factor"/>
    <property type="match status" value="1"/>
</dbReference>
<dbReference type="HAMAP" id="MF_00040">
    <property type="entry name" value="RRF"/>
    <property type="match status" value="1"/>
</dbReference>
<dbReference type="InterPro" id="IPR002661">
    <property type="entry name" value="Ribosome_recyc_fac"/>
</dbReference>
<dbReference type="InterPro" id="IPR023584">
    <property type="entry name" value="Ribosome_recyc_fac_dom"/>
</dbReference>
<dbReference type="InterPro" id="IPR036191">
    <property type="entry name" value="RRF_sf"/>
</dbReference>
<dbReference type="NCBIfam" id="TIGR00496">
    <property type="entry name" value="frr"/>
    <property type="match status" value="1"/>
</dbReference>
<dbReference type="PANTHER" id="PTHR20982:SF3">
    <property type="entry name" value="MITOCHONDRIAL RIBOSOME RECYCLING FACTOR PSEUDO 1"/>
    <property type="match status" value="1"/>
</dbReference>
<dbReference type="PANTHER" id="PTHR20982">
    <property type="entry name" value="RIBOSOME RECYCLING FACTOR"/>
    <property type="match status" value="1"/>
</dbReference>
<dbReference type="Pfam" id="PF01765">
    <property type="entry name" value="RRF"/>
    <property type="match status" value="1"/>
</dbReference>
<dbReference type="SUPFAM" id="SSF55194">
    <property type="entry name" value="Ribosome recycling factor, RRF"/>
    <property type="match status" value="1"/>
</dbReference>
<proteinExistence type="inferred from homology"/>